<reference key="1">
    <citation type="journal article" date="2008" name="J. Bacteriol.">
        <title>The complete genome sequence of Escherichia coli DH10B: insights into the biology of a laboratory workhorse.</title>
        <authorList>
            <person name="Durfee T."/>
            <person name="Nelson R."/>
            <person name="Baldwin S."/>
            <person name="Plunkett G. III"/>
            <person name="Burland V."/>
            <person name="Mau B."/>
            <person name="Petrosino J.F."/>
            <person name="Qin X."/>
            <person name="Muzny D.M."/>
            <person name="Ayele M."/>
            <person name="Gibbs R.A."/>
            <person name="Csorgo B."/>
            <person name="Posfai G."/>
            <person name="Weinstock G.M."/>
            <person name="Blattner F.R."/>
        </authorList>
    </citation>
    <scope>NUCLEOTIDE SEQUENCE [LARGE SCALE GENOMIC DNA]</scope>
    <source>
        <strain>K12 / DH10B</strain>
    </source>
</reference>
<accession>B1XHC9</accession>
<comment type="function">
    <text evidence="1">The RuvA-RuvB-RuvC complex processes Holliday junction (HJ) DNA during genetic recombination and DNA repair, while the RuvA-RuvB complex plays an important role in the rescue of blocked DNA replication forks via replication fork reversal (RFR). RuvA specifically binds to HJ cruciform DNA, conferring on it an open structure. The RuvB hexamer acts as an ATP-dependent pump, pulling dsDNA into and through the RuvAB complex. HJ branch migration allows RuvC to scan DNA until it finds its consensus sequence, where it cleaves and resolves the cruciform DNA.</text>
</comment>
<comment type="subunit">
    <text evidence="1">Homotetramer. Forms an RuvA(8)-RuvB(12)-Holliday junction (HJ) complex. HJ DNA is sandwiched between 2 RuvA tetramers; dsDNA enters through RuvA and exits via RuvB. An RuvB hexamer assembles on each DNA strand where it exits the tetramer. Each RuvB hexamer is contacted by two RuvA subunits (via domain III) on 2 adjacent RuvB subunits; this complex drives branch migration. In the full resolvosome a probable DNA-RuvA(4)-RuvB(12)-RuvC(2) complex forms which resolves the HJ.</text>
</comment>
<comment type="subcellular location">
    <subcellularLocation>
        <location evidence="1">Cytoplasm</location>
    </subcellularLocation>
</comment>
<comment type="domain">
    <text evidence="1">Has three domains with a flexible linker between the domains II and III and assumes an 'L' shape. Domain III is highly mobile and contacts RuvB.</text>
</comment>
<comment type="similarity">
    <text evidence="1">Belongs to the RuvA family.</text>
</comment>
<feature type="chain" id="PRO_1000090314" description="Holliday junction branch migration complex subunit RuvA">
    <location>
        <begin position="1"/>
        <end position="203"/>
    </location>
</feature>
<feature type="region of interest" description="Domain I" evidence="1">
    <location>
        <begin position="1"/>
        <end position="64"/>
    </location>
</feature>
<feature type="region of interest" description="Domain II" evidence="1">
    <location>
        <begin position="65"/>
        <end position="142"/>
    </location>
</feature>
<feature type="region of interest" description="Flexible linker" evidence="1">
    <location>
        <begin position="143"/>
        <end position="154"/>
    </location>
</feature>
<feature type="region of interest" description="Domain III" evidence="1">
    <location>
        <begin position="155"/>
        <end position="203"/>
    </location>
</feature>
<name>RUVA_ECODH</name>
<dbReference type="EMBL" id="CP000948">
    <property type="protein sequence ID" value="ACB03059.1"/>
    <property type="molecule type" value="Genomic_DNA"/>
</dbReference>
<dbReference type="RefSeq" id="WP_000580323.1">
    <property type="nucleotide sequence ID" value="NC_010473.1"/>
</dbReference>
<dbReference type="SMR" id="B1XHC9"/>
<dbReference type="GeneID" id="75057740"/>
<dbReference type="KEGG" id="ecd:ECDH10B_2002"/>
<dbReference type="HOGENOM" id="CLU_087936_0_0_6"/>
<dbReference type="GO" id="GO:0005737">
    <property type="term" value="C:cytoplasm"/>
    <property type="evidence" value="ECO:0007669"/>
    <property type="project" value="UniProtKB-SubCell"/>
</dbReference>
<dbReference type="GO" id="GO:0009379">
    <property type="term" value="C:Holliday junction helicase complex"/>
    <property type="evidence" value="ECO:0007669"/>
    <property type="project" value="InterPro"/>
</dbReference>
<dbReference type="GO" id="GO:0048476">
    <property type="term" value="C:Holliday junction resolvase complex"/>
    <property type="evidence" value="ECO:0007669"/>
    <property type="project" value="UniProtKB-UniRule"/>
</dbReference>
<dbReference type="GO" id="GO:0005524">
    <property type="term" value="F:ATP binding"/>
    <property type="evidence" value="ECO:0007669"/>
    <property type="project" value="InterPro"/>
</dbReference>
<dbReference type="GO" id="GO:0000400">
    <property type="term" value="F:four-way junction DNA binding"/>
    <property type="evidence" value="ECO:0007669"/>
    <property type="project" value="UniProtKB-UniRule"/>
</dbReference>
<dbReference type="GO" id="GO:0009378">
    <property type="term" value="F:four-way junction helicase activity"/>
    <property type="evidence" value="ECO:0007669"/>
    <property type="project" value="InterPro"/>
</dbReference>
<dbReference type="GO" id="GO:0006310">
    <property type="term" value="P:DNA recombination"/>
    <property type="evidence" value="ECO:0007669"/>
    <property type="project" value="UniProtKB-UniRule"/>
</dbReference>
<dbReference type="GO" id="GO:0006281">
    <property type="term" value="P:DNA repair"/>
    <property type="evidence" value="ECO:0007669"/>
    <property type="project" value="UniProtKB-UniRule"/>
</dbReference>
<dbReference type="GO" id="GO:0009432">
    <property type="term" value="P:SOS response"/>
    <property type="evidence" value="ECO:0007669"/>
    <property type="project" value="UniProtKB-UniRule"/>
</dbReference>
<dbReference type="CDD" id="cd14332">
    <property type="entry name" value="UBA_RuvA_C"/>
    <property type="match status" value="1"/>
</dbReference>
<dbReference type="FunFam" id="1.10.150.20:FF:000012">
    <property type="entry name" value="Holliday junction ATP-dependent DNA helicase RuvA"/>
    <property type="match status" value="1"/>
</dbReference>
<dbReference type="FunFam" id="1.10.8.10:FF:000008">
    <property type="entry name" value="Holliday junction ATP-dependent DNA helicase RuvA"/>
    <property type="match status" value="1"/>
</dbReference>
<dbReference type="FunFam" id="2.40.50.140:FF:000083">
    <property type="entry name" value="Holliday junction ATP-dependent DNA helicase RuvA"/>
    <property type="match status" value="1"/>
</dbReference>
<dbReference type="Gene3D" id="1.10.150.20">
    <property type="entry name" value="5' to 3' exonuclease, C-terminal subdomain"/>
    <property type="match status" value="1"/>
</dbReference>
<dbReference type="Gene3D" id="1.10.8.10">
    <property type="entry name" value="DNA helicase RuvA subunit, C-terminal domain"/>
    <property type="match status" value="1"/>
</dbReference>
<dbReference type="Gene3D" id="2.40.50.140">
    <property type="entry name" value="Nucleic acid-binding proteins"/>
    <property type="match status" value="1"/>
</dbReference>
<dbReference type="HAMAP" id="MF_00031">
    <property type="entry name" value="DNA_HJ_migration_RuvA"/>
    <property type="match status" value="1"/>
</dbReference>
<dbReference type="InterPro" id="IPR013849">
    <property type="entry name" value="DNA_helicase_Holl-junc_RuvA_I"/>
</dbReference>
<dbReference type="InterPro" id="IPR003583">
    <property type="entry name" value="Hlx-hairpin-Hlx_DNA-bd_motif"/>
</dbReference>
<dbReference type="InterPro" id="IPR012340">
    <property type="entry name" value="NA-bd_OB-fold"/>
</dbReference>
<dbReference type="InterPro" id="IPR000085">
    <property type="entry name" value="RuvA"/>
</dbReference>
<dbReference type="InterPro" id="IPR010994">
    <property type="entry name" value="RuvA_2-like"/>
</dbReference>
<dbReference type="InterPro" id="IPR011114">
    <property type="entry name" value="RuvA_C"/>
</dbReference>
<dbReference type="InterPro" id="IPR036267">
    <property type="entry name" value="RuvA_C_sf"/>
</dbReference>
<dbReference type="NCBIfam" id="TIGR00084">
    <property type="entry name" value="ruvA"/>
    <property type="match status" value="1"/>
</dbReference>
<dbReference type="Pfam" id="PF14520">
    <property type="entry name" value="HHH_5"/>
    <property type="match status" value="1"/>
</dbReference>
<dbReference type="Pfam" id="PF07499">
    <property type="entry name" value="RuvA_C"/>
    <property type="match status" value="1"/>
</dbReference>
<dbReference type="Pfam" id="PF01330">
    <property type="entry name" value="RuvA_N"/>
    <property type="match status" value="1"/>
</dbReference>
<dbReference type="SMART" id="SM00278">
    <property type="entry name" value="HhH1"/>
    <property type="match status" value="2"/>
</dbReference>
<dbReference type="SUPFAM" id="SSF46929">
    <property type="entry name" value="DNA helicase RuvA subunit, C-terminal domain"/>
    <property type="match status" value="1"/>
</dbReference>
<dbReference type="SUPFAM" id="SSF50249">
    <property type="entry name" value="Nucleic acid-binding proteins"/>
    <property type="match status" value="1"/>
</dbReference>
<dbReference type="SUPFAM" id="SSF47781">
    <property type="entry name" value="RuvA domain 2-like"/>
    <property type="match status" value="1"/>
</dbReference>
<proteinExistence type="inferred from homology"/>
<evidence type="ECO:0000255" key="1">
    <source>
        <dbReference type="HAMAP-Rule" id="MF_00031"/>
    </source>
</evidence>
<organism>
    <name type="scientific">Escherichia coli (strain K12 / DH10B)</name>
    <dbReference type="NCBI Taxonomy" id="316385"/>
    <lineage>
        <taxon>Bacteria</taxon>
        <taxon>Pseudomonadati</taxon>
        <taxon>Pseudomonadota</taxon>
        <taxon>Gammaproteobacteria</taxon>
        <taxon>Enterobacterales</taxon>
        <taxon>Enterobacteriaceae</taxon>
        <taxon>Escherichia</taxon>
    </lineage>
</organism>
<gene>
    <name evidence="1" type="primary">ruvA</name>
    <name type="ordered locus">ECDH10B_2002</name>
</gene>
<protein>
    <recommendedName>
        <fullName evidence="1">Holliday junction branch migration complex subunit RuvA</fullName>
    </recommendedName>
</protein>
<keyword id="KW-0963">Cytoplasm</keyword>
<keyword id="KW-0227">DNA damage</keyword>
<keyword id="KW-0233">DNA recombination</keyword>
<keyword id="KW-0234">DNA repair</keyword>
<keyword id="KW-0238">DNA-binding</keyword>
<keyword id="KW-0742">SOS response</keyword>
<sequence length="203" mass="22086">MIGRLRGIIIEKQPPLVLIEVGGVGYEVHMPMTCFYELPEAGQEAIVFTHFVVREDAQLLYGFNNKQERTLFKELIKTNGVGPKLALAILSGMSAQQFVNAVEREEVGALVKLPGIGKKTAERLIVEMKDRFKGLHGDLFTPAADLVLTSPASPATDDAEQEAVAALVALGYKPQEASRMVSKIARPDASSETLIREALRAAL</sequence>